<reference key="1">
    <citation type="submission" date="2006-09" db="EMBL/GenBank/DDBJ databases">
        <authorList>
            <consortium name="The Klebsiella pneumonia Genome Sequencing Project"/>
            <person name="McClelland M."/>
            <person name="Sanderson E.K."/>
            <person name="Spieth J."/>
            <person name="Clifton W.S."/>
            <person name="Latreille P."/>
            <person name="Sabo A."/>
            <person name="Pepin K."/>
            <person name="Bhonagiri V."/>
            <person name="Porwollik S."/>
            <person name="Ali J."/>
            <person name="Wilson R.K."/>
        </authorList>
    </citation>
    <scope>NUCLEOTIDE SEQUENCE [LARGE SCALE GENOMIC DNA]</scope>
    <source>
        <strain>ATCC 700721 / MGH 78578</strain>
    </source>
</reference>
<keyword id="KW-0997">Cell inner membrane</keyword>
<keyword id="KW-1003">Cell membrane</keyword>
<keyword id="KW-0445">Lipid transport</keyword>
<keyword id="KW-0472">Membrane</keyword>
<keyword id="KW-0812">Transmembrane</keyword>
<keyword id="KW-1133">Transmembrane helix</keyword>
<keyword id="KW-0813">Transport</keyword>
<comment type="function">
    <text evidence="1">Catalyzes the facilitated diffusion of 2-acyl-glycero-3-phosphoethanolamine (2-acyl-GPE) into the cell.</text>
</comment>
<comment type="subcellular location">
    <subcellularLocation>
        <location evidence="1">Cell inner membrane</location>
        <topology evidence="1">Multi-pass membrane protein</topology>
    </subcellularLocation>
</comment>
<comment type="similarity">
    <text evidence="1">Belongs to the major facilitator superfamily. LplT (TC 2.A.1.42) family.</text>
</comment>
<accession>A6TDH1</accession>
<organism>
    <name type="scientific">Klebsiella pneumoniae subsp. pneumoniae (strain ATCC 700721 / MGH 78578)</name>
    <dbReference type="NCBI Taxonomy" id="272620"/>
    <lineage>
        <taxon>Bacteria</taxon>
        <taxon>Pseudomonadati</taxon>
        <taxon>Pseudomonadota</taxon>
        <taxon>Gammaproteobacteria</taxon>
        <taxon>Enterobacterales</taxon>
        <taxon>Enterobacteriaceae</taxon>
        <taxon>Klebsiella/Raoultella group</taxon>
        <taxon>Klebsiella</taxon>
        <taxon>Klebsiella pneumoniae complex</taxon>
    </lineage>
</organism>
<gene>
    <name evidence="1" type="primary">lplT</name>
    <name type="ordered locus">KPN78578_31810</name>
    <name type="ORF">KPN_03244</name>
</gene>
<proteinExistence type="inferred from homology"/>
<name>LPLT_KLEP7</name>
<sequence length="397" mass="41698">MSESVHTNPSLYSKGMLAVICAQFLSAFGDNALLFATLALMKQLYYPEWSQPVLQMLFVGAYILFAPFVGQFADSFAKGRVMMVANGLKLLGAGCICFGVNPFIGYTLVGIGAAAYSPAKYGILGELTTGDKLVKANGLMESSTIAAILLGSMAGGILADWHVLAALIVCALVYGGAVVANLWIPRLPAARPGQSWRFKPMTHSFFSACRTLWRNGETRFSLMGTSLFWGAGVTLRFLLVIWVPVALGITSNAMPTYLNAMVAVGIVLGAGAAAKLVTLETVSRCMPAGILIGIAVIAFAVQQSLLPAFGLLLLLGVFGGFFIVPLNALLQERGKHSVGAGNAIAVQNLGENVAMLLMLGLYSLAVSVGVPPVAVGIGFGAVFAVAIAALWVWGRRK</sequence>
<feature type="chain" id="PRO_1000069312" description="Lysophospholipid transporter LplT">
    <location>
        <begin position="1"/>
        <end position="397"/>
    </location>
</feature>
<feature type="transmembrane region" description="Helical" evidence="1">
    <location>
        <begin position="16"/>
        <end position="36"/>
    </location>
</feature>
<feature type="transmembrane region" description="Helical" evidence="1">
    <location>
        <begin position="53"/>
        <end position="73"/>
    </location>
</feature>
<feature type="transmembrane region" description="Helical" evidence="1">
    <location>
        <begin position="91"/>
        <end position="111"/>
    </location>
</feature>
<feature type="transmembrane region" description="Helical" evidence="1">
    <location>
        <begin position="139"/>
        <end position="159"/>
    </location>
</feature>
<feature type="transmembrane region" description="Helical" evidence="1">
    <location>
        <begin position="164"/>
        <end position="184"/>
    </location>
</feature>
<feature type="transmembrane region" description="Helical" evidence="1">
    <location>
        <begin position="227"/>
        <end position="247"/>
    </location>
</feature>
<feature type="transmembrane region" description="Helical" evidence="1">
    <location>
        <begin position="253"/>
        <end position="273"/>
    </location>
</feature>
<feature type="transmembrane region" description="Helical" evidence="1">
    <location>
        <begin position="281"/>
        <end position="301"/>
    </location>
</feature>
<feature type="transmembrane region" description="Helical" evidence="1">
    <location>
        <begin position="305"/>
        <end position="325"/>
    </location>
</feature>
<feature type="transmembrane region" description="Helical" evidence="1">
    <location>
        <begin position="352"/>
        <end position="372"/>
    </location>
</feature>
<feature type="transmembrane region" description="Helical" evidence="1">
    <location>
        <begin position="373"/>
        <end position="393"/>
    </location>
</feature>
<dbReference type="EMBL" id="CP000647">
    <property type="protein sequence ID" value="ABR78642.1"/>
    <property type="molecule type" value="Genomic_DNA"/>
</dbReference>
<dbReference type="RefSeq" id="WP_002915976.1">
    <property type="nucleotide sequence ID" value="NC_009648.1"/>
</dbReference>
<dbReference type="SMR" id="A6TDH1"/>
<dbReference type="STRING" id="272620.KPN_03244"/>
<dbReference type="PaxDb" id="272620-KPN_03244"/>
<dbReference type="EnsemblBacteria" id="ABR78642">
    <property type="protein sequence ID" value="ABR78642"/>
    <property type="gene ID" value="KPN_03244"/>
</dbReference>
<dbReference type="KEGG" id="kpn:KPN_03244"/>
<dbReference type="HOGENOM" id="CLU_047399_0_0_6"/>
<dbReference type="Proteomes" id="UP000000265">
    <property type="component" value="Chromosome"/>
</dbReference>
<dbReference type="GO" id="GO:0005886">
    <property type="term" value="C:plasma membrane"/>
    <property type="evidence" value="ECO:0007669"/>
    <property type="project" value="UniProtKB-SubCell"/>
</dbReference>
<dbReference type="GO" id="GO:0051978">
    <property type="term" value="F:lysophospholipid:sodium symporter activity"/>
    <property type="evidence" value="ECO:0007669"/>
    <property type="project" value="InterPro"/>
</dbReference>
<dbReference type="CDD" id="cd06173">
    <property type="entry name" value="MFS_MefA_like"/>
    <property type="match status" value="1"/>
</dbReference>
<dbReference type="Gene3D" id="1.20.1250.20">
    <property type="entry name" value="MFS general substrate transporter like domains"/>
    <property type="match status" value="1"/>
</dbReference>
<dbReference type="HAMAP" id="MF_01585">
    <property type="entry name" value="MFS_LplT"/>
    <property type="match status" value="1"/>
</dbReference>
<dbReference type="InterPro" id="IPR023727">
    <property type="entry name" value="LysoPLipid__transptr_LplT"/>
</dbReference>
<dbReference type="InterPro" id="IPR011701">
    <property type="entry name" value="MFS"/>
</dbReference>
<dbReference type="InterPro" id="IPR036259">
    <property type="entry name" value="MFS_trans_sf"/>
</dbReference>
<dbReference type="NCBIfam" id="NF008397">
    <property type="entry name" value="PRK11195.1"/>
    <property type="match status" value="1"/>
</dbReference>
<dbReference type="PANTHER" id="PTHR43266">
    <property type="entry name" value="MACROLIDE-EFFLUX PROTEIN"/>
    <property type="match status" value="1"/>
</dbReference>
<dbReference type="PANTHER" id="PTHR43266:SF2">
    <property type="entry name" value="MAJOR FACILITATOR SUPERFAMILY (MFS) PROFILE DOMAIN-CONTAINING PROTEIN"/>
    <property type="match status" value="1"/>
</dbReference>
<dbReference type="Pfam" id="PF07690">
    <property type="entry name" value="MFS_1"/>
    <property type="match status" value="1"/>
</dbReference>
<dbReference type="SUPFAM" id="SSF103473">
    <property type="entry name" value="MFS general substrate transporter"/>
    <property type="match status" value="1"/>
</dbReference>
<protein>
    <recommendedName>
        <fullName evidence="1">Lysophospholipid transporter LplT</fullName>
    </recommendedName>
</protein>
<evidence type="ECO:0000255" key="1">
    <source>
        <dbReference type="HAMAP-Rule" id="MF_01585"/>
    </source>
</evidence>